<feature type="chain" id="PRO_1000023359" description="Translational regulator CsrA">
    <location>
        <begin position="1"/>
        <end position="66"/>
    </location>
</feature>
<proteinExistence type="inferred from homology"/>
<keyword id="KW-0010">Activator</keyword>
<keyword id="KW-0963">Cytoplasm</keyword>
<keyword id="KW-1185">Reference proteome</keyword>
<keyword id="KW-0678">Repressor</keyword>
<keyword id="KW-0694">RNA-binding</keyword>
<keyword id="KW-0810">Translation regulation</keyword>
<gene>
    <name evidence="1" type="primary">csrA</name>
    <name type="ordered locus">Mlg_1479</name>
</gene>
<accession>Q0A8K9</accession>
<comment type="function">
    <text evidence="1">A key translational regulator that binds mRNA to regulate translation initiation and/or mRNA stability. Mediates global changes in gene expression, shifting from rapid growth to stress survival by linking envelope stress, the stringent response and the catabolite repression systems. Usually binds in the 5'-UTR; binding at or near the Shine-Dalgarno sequence prevents ribosome-binding, repressing translation, binding elsewhere in the 5'-UTR can activate translation and/or stabilize the mRNA. Its function is antagonized by small RNA(s).</text>
</comment>
<comment type="subunit">
    <text evidence="1">Homodimer; the beta-strands of each monomer intercalate to form a hydrophobic core, while the alpha-helices form wings that extend away from the core.</text>
</comment>
<comment type="subcellular location">
    <subcellularLocation>
        <location evidence="1">Cytoplasm</location>
    </subcellularLocation>
</comment>
<comment type="similarity">
    <text evidence="1">Belongs to the CsrA/RsmA family.</text>
</comment>
<evidence type="ECO:0000255" key="1">
    <source>
        <dbReference type="HAMAP-Rule" id="MF_00167"/>
    </source>
</evidence>
<sequence>MLILTRRVGETLMIGDDVSVTVLGVKGNQVRIGVNAPRDVSVHREEIYDRIRHEKEGGPEDKGNSE</sequence>
<protein>
    <recommendedName>
        <fullName evidence="1">Translational regulator CsrA</fullName>
    </recommendedName>
    <alternativeName>
        <fullName evidence="1">Carbon storage regulator</fullName>
    </alternativeName>
</protein>
<dbReference type="EMBL" id="CP000453">
    <property type="protein sequence ID" value="ABI56828.1"/>
    <property type="molecule type" value="Genomic_DNA"/>
</dbReference>
<dbReference type="RefSeq" id="WP_011629223.1">
    <property type="nucleotide sequence ID" value="NC_008340.1"/>
</dbReference>
<dbReference type="SMR" id="Q0A8K9"/>
<dbReference type="KEGG" id="aeh:Mlg_1479"/>
<dbReference type="eggNOG" id="COG1551">
    <property type="taxonomic scope" value="Bacteria"/>
</dbReference>
<dbReference type="HOGENOM" id="CLU_164837_2_1_6"/>
<dbReference type="OrthoDB" id="9809061at2"/>
<dbReference type="Proteomes" id="UP000001962">
    <property type="component" value="Chromosome"/>
</dbReference>
<dbReference type="GO" id="GO:0005829">
    <property type="term" value="C:cytosol"/>
    <property type="evidence" value="ECO:0007669"/>
    <property type="project" value="TreeGrafter"/>
</dbReference>
<dbReference type="GO" id="GO:0048027">
    <property type="term" value="F:mRNA 5'-UTR binding"/>
    <property type="evidence" value="ECO:0007669"/>
    <property type="project" value="UniProtKB-UniRule"/>
</dbReference>
<dbReference type="GO" id="GO:0006402">
    <property type="term" value="P:mRNA catabolic process"/>
    <property type="evidence" value="ECO:0007669"/>
    <property type="project" value="InterPro"/>
</dbReference>
<dbReference type="GO" id="GO:0045947">
    <property type="term" value="P:negative regulation of translational initiation"/>
    <property type="evidence" value="ECO:0007669"/>
    <property type="project" value="UniProtKB-UniRule"/>
</dbReference>
<dbReference type="GO" id="GO:0045948">
    <property type="term" value="P:positive regulation of translational initiation"/>
    <property type="evidence" value="ECO:0007669"/>
    <property type="project" value="UniProtKB-UniRule"/>
</dbReference>
<dbReference type="GO" id="GO:0006109">
    <property type="term" value="P:regulation of carbohydrate metabolic process"/>
    <property type="evidence" value="ECO:0007669"/>
    <property type="project" value="UniProtKB-UniRule"/>
</dbReference>
<dbReference type="FunFam" id="2.60.40.4380:FF:000001">
    <property type="entry name" value="Translational regulator CsrA"/>
    <property type="match status" value="1"/>
</dbReference>
<dbReference type="Gene3D" id="2.60.40.4380">
    <property type="entry name" value="Translational regulator CsrA"/>
    <property type="match status" value="1"/>
</dbReference>
<dbReference type="HAMAP" id="MF_00167">
    <property type="entry name" value="CsrA"/>
    <property type="match status" value="1"/>
</dbReference>
<dbReference type="InterPro" id="IPR003751">
    <property type="entry name" value="CsrA"/>
</dbReference>
<dbReference type="InterPro" id="IPR036107">
    <property type="entry name" value="CsrA_sf"/>
</dbReference>
<dbReference type="NCBIfam" id="TIGR00202">
    <property type="entry name" value="csrA"/>
    <property type="match status" value="1"/>
</dbReference>
<dbReference type="NCBIfam" id="NF002469">
    <property type="entry name" value="PRK01712.1"/>
    <property type="match status" value="1"/>
</dbReference>
<dbReference type="PANTHER" id="PTHR34984">
    <property type="entry name" value="CARBON STORAGE REGULATOR"/>
    <property type="match status" value="1"/>
</dbReference>
<dbReference type="PANTHER" id="PTHR34984:SF1">
    <property type="entry name" value="CARBON STORAGE REGULATOR"/>
    <property type="match status" value="1"/>
</dbReference>
<dbReference type="Pfam" id="PF02599">
    <property type="entry name" value="CsrA"/>
    <property type="match status" value="1"/>
</dbReference>
<dbReference type="SUPFAM" id="SSF117130">
    <property type="entry name" value="CsrA-like"/>
    <property type="match status" value="1"/>
</dbReference>
<reference key="1">
    <citation type="submission" date="2006-08" db="EMBL/GenBank/DDBJ databases">
        <title>Complete sequence of Alkalilimnicola ehrilichei MLHE-1.</title>
        <authorList>
            <person name="Copeland A."/>
            <person name="Lucas S."/>
            <person name="Lapidus A."/>
            <person name="Barry K."/>
            <person name="Detter J.C."/>
            <person name="Glavina del Rio T."/>
            <person name="Hammon N."/>
            <person name="Israni S."/>
            <person name="Dalin E."/>
            <person name="Tice H."/>
            <person name="Pitluck S."/>
            <person name="Sims D."/>
            <person name="Brettin T."/>
            <person name="Bruce D."/>
            <person name="Han C."/>
            <person name="Tapia R."/>
            <person name="Gilna P."/>
            <person name="Schmutz J."/>
            <person name="Larimer F."/>
            <person name="Land M."/>
            <person name="Hauser L."/>
            <person name="Kyrpides N."/>
            <person name="Mikhailova N."/>
            <person name="Oremland R.S."/>
            <person name="Hoeft S.E."/>
            <person name="Switzer-Blum J."/>
            <person name="Kulp T."/>
            <person name="King G."/>
            <person name="Tabita R."/>
            <person name="Witte B."/>
            <person name="Santini J.M."/>
            <person name="Basu P."/>
            <person name="Hollibaugh J.T."/>
            <person name="Xie G."/>
            <person name="Stolz J.F."/>
            <person name="Richardson P."/>
        </authorList>
    </citation>
    <scope>NUCLEOTIDE SEQUENCE [LARGE SCALE GENOMIC DNA]</scope>
    <source>
        <strain>ATCC BAA-1101 / DSM 17681 / MLHE-1</strain>
    </source>
</reference>
<organism>
    <name type="scientific">Alkalilimnicola ehrlichii (strain ATCC BAA-1101 / DSM 17681 / MLHE-1)</name>
    <dbReference type="NCBI Taxonomy" id="187272"/>
    <lineage>
        <taxon>Bacteria</taxon>
        <taxon>Pseudomonadati</taxon>
        <taxon>Pseudomonadota</taxon>
        <taxon>Gammaproteobacteria</taxon>
        <taxon>Chromatiales</taxon>
        <taxon>Ectothiorhodospiraceae</taxon>
        <taxon>Alkalilimnicola</taxon>
    </lineage>
</organism>
<name>CSRA_ALKEH</name>